<dbReference type="EMBL" id="CP000851">
    <property type="protein sequence ID" value="ABV86405.1"/>
    <property type="molecule type" value="Genomic_DNA"/>
</dbReference>
<dbReference type="RefSeq" id="WP_012154336.1">
    <property type="nucleotide sequence ID" value="NC_009901.1"/>
</dbReference>
<dbReference type="SMR" id="A8H1G8"/>
<dbReference type="STRING" id="398579.Spea_1078"/>
<dbReference type="KEGG" id="spl:Spea_1078"/>
<dbReference type="eggNOG" id="COG3022">
    <property type="taxonomic scope" value="Bacteria"/>
</dbReference>
<dbReference type="HOGENOM" id="CLU_061989_0_0_6"/>
<dbReference type="OrthoDB" id="9777133at2"/>
<dbReference type="Proteomes" id="UP000002608">
    <property type="component" value="Chromosome"/>
</dbReference>
<dbReference type="GO" id="GO:0005829">
    <property type="term" value="C:cytosol"/>
    <property type="evidence" value="ECO:0007669"/>
    <property type="project" value="TreeGrafter"/>
</dbReference>
<dbReference type="GO" id="GO:0033194">
    <property type="term" value="P:response to hydroperoxide"/>
    <property type="evidence" value="ECO:0007669"/>
    <property type="project" value="TreeGrafter"/>
</dbReference>
<dbReference type="HAMAP" id="MF_00652">
    <property type="entry name" value="UPF0246"/>
    <property type="match status" value="1"/>
</dbReference>
<dbReference type="InterPro" id="IPR005583">
    <property type="entry name" value="YaaA"/>
</dbReference>
<dbReference type="NCBIfam" id="NF002541">
    <property type="entry name" value="PRK02101.1-1"/>
    <property type="match status" value="1"/>
</dbReference>
<dbReference type="NCBIfam" id="NF002542">
    <property type="entry name" value="PRK02101.1-3"/>
    <property type="match status" value="1"/>
</dbReference>
<dbReference type="PANTHER" id="PTHR30283:SF4">
    <property type="entry name" value="PEROXIDE STRESS RESISTANCE PROTEIN YAAA"/>
    <property type="match status" value="1"/>
</dbReference>
<dbReference type="PANTHER" id="PTHR30283">
    <property type="entry name" value="PEROXIDE STRESS RESPONSE PROTEIN YAAA"/>
    <property type="match status" value="1"/>
</dbReference>
<dbReference type="Pfam" id="PF03883">
    <property type="entry name" value="H2O2_YaaD"/>
    <property type="match status" value="1"/>
</dbReference>
<proteinExistence type="inferred from homology"/>
<protein>
    <recommendedName>
        <fullName evidence="1">UPF0246 protein Spea_1078</fullName>
    </recommendedName>
</protein>
<comment type="similarity">
    <text evidence="1">Belongs to the UPF0246 family.</text>
</comment>
<organism>
    <name type="scientific">Shewanella pealeana (strain ATCC 700345 / ANG-SQ1)</name>
    <dbReference type="NCBI Taxonomy" id="398579"/>
    <lineage>
        <taxon>Bacteria</taxon>
        <taxon>Pseudomonadati</taxon>
        <taxon>Pseudomonadota</taxon>
        <taxon>Gammaproteobacteria</taxon>
        <taxon>Alteromonadales</taxon>
        <taxon>Shewanellaceae</taxon>
        <taxon>Shewanella</taxon>
    </lineage>
</organism>
<keyword id="KW-1185">Reference proteome</keyword>
<sequence length="257" mass="29017">MLILVSPAKTLDFDNPPGSENYSMPTLLDQSEQLIEVCRKLTPTDVATLMKVSDKIAGLNVARFSSWQKEFTPTNAKQAVFAFRGDVYTGLDADTLSPQSLDRAQQQLRILSGLYGLLKPLDLMQPYRLEMGTRLANERGTNLYQFWGDIITDELNQTTAEQGSEFIINLASNEYFKAVKPKKLNAGLITPVFKDCKNGQYKVISFFAKKARGMMVRYILDNNVDSLEALTKFDTAGYYYSEKDSTVNEPVFLREEQ</sequence>
<name>Y1078_SHEPA</name>
<reference key="1">
    <citation type="submission" date="2007-10" db="EMBL/GenBank/DDBJ databases">
        <title>Complete sequence of Shewanella pealeana ATCC 700345.</title>
        <authorList>
            <consortium name="US DOE Joint Genome Institute"/>
            <person name="Copeland A."/>
            <person name="Lucas S."/>
            <person name="Lapidus A."/>
            <person name="Barry K."/>
            <person name="Glavina del Rio T."/>
            <person name="Dalin E."/>
            <person name="Tice H."/>
            <person name="Pitluck S."/>
            <person name="Chertkov O."/>
            <person name="Brettin T."/>
            <person name="Bruce D."/>
            <person name="Detter J.C."/>
            <person name="Han C."/>
            <person name="Schmutz J."/>
            <person name="Larimer F."/>
            <person name="Land M."/>
            <person name="Hauser L."/>
            <person name="Kyrpides N."/>
            <person name="Kim E."/>
            <person name="Zhao J.-S.Z."/>
            <person name="Manno D."/>
            <person name="Hawari J."/>
            <person name="Richardson P."/>
        </authorList>
    </citation>
    <scope>NUCLEOTIDE SEQUENCE [LARGE SCALE GENOMIC DNA]</scope>
    <source>
        <strain>ATCC 700345 / ANG-SQ1</strain>
    </source>
</reference>
<feature type="chain" id="PRO_1000082779" description="UPF0246 protein Spea_1078">
    <location>
        <begin position="1"/>
        <end position="257"/>
    </location>
</feature>
<gene>
    <name type="ordered locus">Spea_1078</name>
</gene>
<evidence type="ECO:0000255" key="1">
    <source>
        <dbReference type="HAMAP-Rule" id="MF_00652"/>
    </source>
</evidence>
<accession>A8H1G8</accession>